<reference key="1">
    <citation type="journal article" date="2008" name="Antimicrob. Agents Chemother.">
        <title>Mutated response regulator graR is responsible for phenotypic conversion of Staphylococcus aureus from heterogeneous vancomycin-intermediate resistance to vancomycin-intermediate resistance.</title>
        <authorList>
            <person name="Neoh H.-M."/>
            <person name="Cui L."/>
            <person name="Yuzawa H."/>
            <person name="Takeuchi F."/>
            <person name="Matsuo M."/>
            <person name="Hiramatsu K."/>
        </authorList>
    </citation>
    <scope>NUCLEOTIDE SEQUENCE [LARGE SCALE GENOMIC DNA]</scope>
    <source>
        <strain>Mu3 / ATCC 700698</strain>
    </source>
</reference>
<proteinExistence type="inferred from homology"/>
<sequence length="292" mass="32177">MSQDVNELSKQPTPDKAEDNAFFPSPYSLSQYTAPKTDFDGVEHKGAYKDGKWKVLMIAAEERYVLLENGKMFSTGNHPVEMLLPLHHLMEAGFDVDVATLSGYPVKLELWAMPTEDEAVISTYNKLKEKLKQPKKLADVIKNELGPDSDYLSVFIPGGHAAVVGISESEDVQQTLDWALDNDRFIVTLCHGPAALLSAGLNREKSPLEGYSVCVFPDSLDEGANIEIGYLPGRLKWLVADLLTKQGLKVVNDDMTGRTLKDRKLLTGDSPLASNELGKLAVNEMLNAIQNK</sequence>
<organism>
    <name type="scientific">Staphylococcus aureus (strain Mu3 / ATCC 700698)</name>
    <dbReference type="NCBI Taxonomy" id="418127"/>
    <lineage>
        <taxon>Bacteria</taxon>
        <taxon>Bacillati</taxon>
        <taxon>Bacillota</taxon>
        <taxon>Bacilli</taxon>
        <taxon>Bacillales</taxon>
        <taxon>Staphylococcaceae</taxon>
        <taxon>Staphylococcus</taxon>
    </lineage>
</organism>
<accession>A7WYY0</accession>
<name>HCHA_STAA1</name>
<dbReference type="EC" id="3.1.2.-" evidence="1"/>
<dbReference type="EC" id="3.5.1.-" evidence="1"/>
<dbReference type="EC" id="3.5.1.124" evidence="1"/>
<dbReference type="EMBL" id="AP009324">
    <property type="protein sequence ID" value="BAF77432.1"/>
    <property type="molecule type" value="Genomic_DNA"/>
</dbReference>
<dbReference type="RefSeq" id="WP_000076404.1">
    <property type="nucleotide sequence ID" value="NZ_CTYB01000013.1"/>
</dbReference>
<dbReference type="SMR" id="A7WYY0"/>
<dbReference type="MEROPS" id="C56.006"/>
<dbReference type="KEGG" id="saw:SAHV_0549"/>
<dbReference type="HOGENOM" id="CLU_066933_0_0_9"/>
<dbReference type="GO" id="GO:0005737">
    <property type="term" value="C:cytoplasm"/>
    <property type="evidence" value="ECO:0007669"/>
    <property type="project" value="UniProtKB-SubCell"/>
</dbReference>
<dbReference type="GO" id="GO:0019172">
    <property type="term" value="F:glyoxalase III activity"/>
    <property type="evidence" value="ECO:0007669"/>
    <property type="project" value="TreeGrafter"/>
</dbReference>
<dbReference type="GO" id="GO:0036524">
    <property type="term" value="F:protein deglycase activity"/>
    <property type="evidence" value="ECO:0007669"/>
    <property type="project" value="UniProtKB-UniRule"/>
</dbReference>
<dbReference type="GO" id="GO:0016790">
    <property type="term" value="F:thiolester hydrolase activity"/>
    <property type="evidence" value="ECO:0007669"/>
    <property type="project" value="UniProtKB-UniRule"/>
</dbReference>
<dbReference type="GO" id="GO:0006281">
    <property type="term" value="P:DNA repair"/>
    <property type="evidence" value="ECO:0007669"/>
    <property type="project" value="UniProtKB-UniRule"/>
</dbReference>
<dbReference type="GO" id="GO:0019243">
    <property type="term" value="P:methylglyoxal catabolic process to D-lactate via S-lactoyl-glutathione"/>
    <property type="evidence" value="ECO:0007669"/>
    <property type="project" value="TreeGrafter"/>
</dbReference>
<dbReference type="GO" id="GO:0030091">
    <property type="term" value="P:protein repair"/>
    <property type="evidence" value="ECO:0007669"/>
    <property type="project" value="UniProtKB-UniRule"/>
</dbReference>
<dbReference type="CDD" id="cd03148">
    <property type="entry name" value="GATase1_EcHsp31_like"/>
    <property type="match status" value="1"/>
</dbReference>
<dbReference type="Gene3D" id="3.40.50.880">
    <property type="match status" value="1"/>
</dbReference>
<dbReference type="HAMAP" id="MF_01046">
    <property type="entry name" value="Deglycase_HchA"/>
    <property type="match status" value="1"/>
</dbReference>
<dbReference type="InterPro" id="IPR029062">
    <property type="entry name" value="Class_I_gatase-like"/>
</dbReference>
<dbReference type="InterPro" id="IPR002818">
    <property type="entry name" value="DJ-1/PfpI"/>
</dbReference>
<dbReference type="InterPro" id="IPR017283">
    <property type="entry name" value="HchA"/>
</dbReference>
<dbReference type="InterPro" id="IPR050325">
    <property type="entry name" value="Prot/Nucl_acid_deglycase"/>
</dbReference>
<dbReference type="NCBIfam" id="NF003168">
    <property type="entry name" value="PRK04155.1"/>
    <property type="match status" value="1"/>
</dbReference>
<dbReference type="PANTHER" id="PTHR48094">
    <property type="entry name" value="PROTEIN/NUCLEIC ACID DEGLYCASE DJ-1-RELATED"/>
    <property type="match status" value="1"/>
</dbReference>
<dbReference type="PANTHER" id="PTHR48094:SF20">
    <property type="entry name" value="PROTEIN_NUCLEIC ACID DEGLYCASE 1"/>
    <property type="match status" value="1"/>
</dbReference>
<dbReference type="Pfam" id="PF01965">
    <property type="entry name" value="DJ-1_PfpI"/>
    <property type="match status" value="1"/>
</dbReference>
<dbReference type="PIRSF" id="PIRSF037798">
    <property type="entry name" value="Chaperone_HchA"/>
    <property type="match status" value="1"/>
</dbReference>
<dbReference type="SUPFAM" id="SSF52317">
    <property type="entry name" value="Class I glutamine amidotransferase-like"/>
    <property type="match status" value="1"/>
</dbReference>
<evidence type="ECO:0000255" key="1">
    <source>
        <dbReference type="HAMAP-Rule" id="MF_01046"/>
    </source>
</evidence>
<evidence type="ECO:0000256" key="2">
    <source>
        <dbReference type="SAM" id="MobiDB-lite"/>
    </source>
</evidence>
<feature type="chain" id="PRO_1000064282" description="Protein/nucleic acid deglycase HchA">
    <location>
        <begin position="1"/>
        <end position="292"/>
    </location>
</feature>
<feature type="region of interest" description="Disordered" evidence="2">
    <location>
        <begin position="1"/>
        <end position="23"/>
    </location>
</feature>
<feature type="compositionally biased region" description="Polar residues" evidence="2">
    <location>
        <begin position="1"/>
        <end position="12"/>
    </location>
</feature>
<feature type="active site" description="Nucleophile" evidence="1">
    <location>
        <position position="190"/>
    </location>
</feature>
<gene>
    <name evidence="1" type="primary">hchA</name>
    <name type="ordered locus">SAHV_0549</name>
</gene>
<comment type="function">
    <text evidence="1">Protein and nucleotide deglycase that catalyzes the deglycation of the Maillard adducts formed between amino groups of proteins or nucleotides and reactive carbonyl groups of glyoxals. Thus, functions as a protein deglycase that repairs methylglyoxal- and glyoxal-glycated proteins, and releases repaired proteins and lactate or glycolate, respectively. Deglycates cysteine, arginine and lysine residues in proteins, and thus reactivates these proteins by reversing glycation by glyoxals. Acts on early glycation intermediates (hemithioacetals and aminocarbinols), preventing the formation of Schiff bases and advanced glycation endproducts (AGE). Also functions as a nucleotide deglycase able to repair glycated guanine in the free nucleotide pool (GTP, GDP, GMP, dGTP) and in DNA and RNA. Is thus involved in a major nucleotide repair system named guanine glycation repair (GG repair), dedicated to reversing methylglyoxal and glyoxal damage via nucleotide sanitization and direct nucleic acid repair. Plays an important role in protecting cells from carbonyl stress.</text>
</comment>
<comment type="catalytic activity">
    <reaction evidence="1">
        <text>N(omega)-(1-hydroxy-2-oxopropyl)-L-arginyl-[protein] + H2O = lactate + L-arginyl-[protein] + H(+)</text>
        <dbReference type="Rhea" id="RHEA:49548"/>
        <dbReference type="Rhea" id="RHEA-COMP:10532"/>
        <dbReference type="Rhea" id="RHEA-COMP:12428"/>
        <dbReference type="ChEBI" id="CHEBI:15377"/>
        <dbReference type="ChEBI" id="CHEBI:15378"/>
        <dbReference type="ChEBI" id="CHEBI:24996"/>
        <dbReference type="ChEBI" id="CHEBI:29965"/>
        <dbReference type="ChEBI" id="CHEBI:131708"/>
        <dbReference type="EC" id="3.5.1.124"/>
    </reaction>
</comment>
<comment type="catalytic activity">
    <reaction evidence="1">
        <text>N(6)-(1-hydroxy-2-oxopropyl)-L-lysyl-[protein] + H2O = lactate + L-lysyl-[protein] + H(+)</text>
        <dbReference type="Rhea" id="RHEA:49552"/>
        <dbReference type="Rhea" id="RHEA-COMP:9752"/>
        <dbReference type="Rhea" id="RHEA-COMP:12429"/>
        <dbReference type="ChEBI" id="CHEBI:15377"/>
        <dbReference type="ChEBI" id="CHEBI:15378"/>
        <dbReference type="ChEBI" id="CHEBI:24996"/>
        <dbReference type="ChEBI" id="CHEBI:29969"/>
        <dbReference type="ChEBI" id="CHEBI:131709"/>
        <dbReference type="EC" id="3.5.1.124"/>
    </reaction>
</comment>
<comment type="catalytic activity">
    <reaction evidence="1">
        <text>S-(1-hydroxy-2-oxopropyl)-L-cysteinyl-[protein] + H2O = lactate + L-cysteinyl-[protein] + H(+)</text>
        <dbReference type="Rhea" id="RHEA:49556"/>
        <dbReference type="Rhea" id="RHEA-COMP:10131"/>
        <dbReference type="Rhea" id="RHEA-COMP:12430"/>
        <dbReference type="ChEBI" id="CHEBI:15377"/>
        <dbReference type="ChEBI" id="CHEBI:15378"/>
        <dbReference type="ChEBI" id="CHEBI:24996"/>
        <dbReference type="ChEBI" id="CHEBI:29950"/>
        <dbReference type="ChEBI" id="CHEBI:131710"/>
        <dbReference type="EC" id="3.5.1.124"/>
    </reaction>
</comment>
<comment type="catalytic activity">
    <reaction evidence="1">
        <text>N(omega)-(1-hydroxy-2-oxoethyl)-L-arginyl-[protein] + H2O = L-arginyl-[protein] + glycolate + H(+)</text>
        <dbReference type="Rhea" id="RHEA:57188"/>
        <dbReference type="Rhea" id="RHEA-COMP:10532"/>
        <dbReference type="Rhea" id="RHEA-COMP:14844"/>
        <dbReference type="ChEBI" id="CHEBI:15377"/>
        <dbReference type="ChEBI" id="CHEBI:15378"/>
        <dbReference type="ChEBI" id="CHEBI:29805"/>
        <dbReference type="ChEBI" id="CHEBI:29965"/>
        <dbReference type="ChEBI" id="CHEBI:141553"/>
        <dbReference type="EC" id="3.5.1.124"/>
    </reaction>
</comment>
<comment type="catalytic activity">
    <reaction evidence="1">
        <text>N(6)-(1-hydroxy-2-oxoethyl)-L-lysyl-[protein] + H2O = glycolate + L-lysyl-[protein] + H(+)</text>
        <dbReference type="Rhea" id="RHEA:57192"/>
        <dbReference type="Rhea" id="RHEA-COMP:9752"/>
        <dbReference type="Rhea" id="RHEA-COMP:14845"/>
        <dbReference type="ChEBI" id="CHEBI:15377"/>
        <dbReference type="ChEBI" id="CHEBI:15378"/>
        <dbReference type="ChEBI" id="CHEBI:29805"/>
        <dbReference type="ChEBI" id="CHEBI:29969"/>
        <dbReference type="ChEBI" id="CHEBI:141554"/>
        <dbReference type="EC" id="3.5.1.124"/>
    </reaction>
</comment>
<comment type="catalytic activity">
    <reaction evidence="1">
        <text>S-(1-hydroxy-2-oxoethyl)-L-cysteinyl-[protein] + H2O = glycolate + L-cysteinyl-[protein] + H(+)</text>
        <dbReference type="Rhea" id="RHEA:57196"/>
        <dbReference type="Rhea" id="RHEA-COMP:10131"/>
        <dbReference type="Rhea" id="RHEA-COMP:14846"/>
        <dbReference type="ChEBI" id="CHEBI:15377"/>
        <dbReference type="ChEBI" id="CHEBI:15378"/>
        <dbReference type="ChEBI" id="CHEBI:29805"/>
        <dbReference type="ChEBI" id="CHEBI:29950"/>
        <dbReference type="ChEBI" id="CHEBI:141555"/>
        <dbReference type="EC" id="3.5.1.124"/>
    </reaction>
</comment>
<comment type="catalytic activity">
    <reaction evidence="1">
        <text>N(2)-(1-hydroxy-2-oxopropyl)-dGTP + H2O = lactate + dGTP + H(+)</text>
        <dbReference type="Rhea" id="RHEA:57244"/>
        <dbReference type="ChEBI" id="CHEBI:15377"/>
        <dbReference type="ChEBI" id="CHEBI:15378"/>
        <dbReference type="ChEBI" id="CHEBI:24996"/>
        <dbReference type="ChEBI" id="CHEBI:61429"/>
        <dbReference type="ChEBI" id="CHEBI:141569"/>
    </reaction>
</comment>
<comment type="catalytic activity">
    <reaction evidence="1">
        <text>N(2)-(1-hydroxy-2-oxopropyl)-GTP + H2O = lactate + GTP + H(+)</text>
        <dbReference type="Rhea" id="RHEA:57256"/>
        <dbReference type="ChEBI" id="CHEBI:15377"/>
        <dbReference type="ChEBI" id="CHEBI:15378"/>
        <dbReference type="ChEBI" id="CHEBI:24996"/>
        <dbReference type="ChEBI" id="CHEBI:37565"/>
        <dbReference type="ChEBI" id="CHEBI:141570"/>
    </reaction>
</comment>
<comment type="catalytic activity">
    <reaction evidence="1">
        <text>N(2)-(1-hydroxy-2-oxopropyl)-GDP + H2O = lactate + GDP + H(+)</text>
        <dbReference type="Rhea" id="RHEA:57260"/>
        <dbReference type="ChEBI" id="CHEBI:15377"/>
        <dbReference type="ChEBI" id="CHEBI:15378"/>
        <dbReference type="ChEBI" id="CHEBI:24996"/>
        <dbReference type="ChEBI" id="CHEBI:58189"/>
        <dbReference type="ChEBI" id="CHEBI:141573"/>
    </reaction>
</comment>
<comment type="catalytic activity">
    <reaction evidence="1">
        <text>N(2)-(1-hydroxy-2-oxopropyl)-GMP + H2O = lactate + GMP + H(+)</text>
        <dbReference type="Rhea" id="RHEA:57268"/>
        <dbReference type="ChEBI" id="CHEBI:15377"/>
        <dbReference type="ChEBI" id="CHEBI:15378"/>
        <dbReference type="ChEBI" id="CHEBI:24996"/>
        <dbReference type="ChEBI" id="CHEBI:58115"/>
        <dbReference type="ChEBI" id="CHEBI:141575"/>
    </reaction>
</comment>
<comment type="catalytic activity">
    <reaction evidence="1">
        <text>N(2)-(1-hydroxy-2-oxoethyl)-dGTP + H2O = dGTP + glycolate + H(+)</text>
        <dbReference type="Rhea" id="RHEA:57248"/>
        <dbReference type="ChEBI" id="CHEBI:15377"/>
        <dbReference type="ChEBI" id="CHEBI:15378"/>
        <dbReference type="ChEBI" id="CHEBI:29805"/>
        <dbReference type="ChEBI" id="CHEBI:61429"/>
        <dbReference type="ChEBI" id="CHEBI:141572"/>
    </reaction>
</comment>
<comment type="catalytic activity">
    <reaction evidence="1">
        <text>N(2)-(1-hydroxy-2-oxoethyl)-GTP + H2O = glycolate + GTP + H(+)</text>
        <dbReference type="Rhea" id="RHEA:57252"/>
        <dbReference type="ChEBI" id="CHEBI:15377"/>
        <dbReference type="ChEBI" id="CHEBI:15378"/>
        <dbReference type="ChEBI" id="CHEBI:29805"/>
        <dbReference type="ChEBI" id="CHEBI:37565"/>
        <dbReference type="ChEBI" id="CHEBI:141571"/>
    </reaction>
</comment>
<comment type="catalytic activity">
    <reaction evidence="1">
        <text>N(2)-(1-hydroxy-2-oxoethyl)-GDP + H2O = glycolate + GDP + H(+)</text>
        <dbReference type="Rhea" id="RHEA:57264"/>
        <dbReference type="ChEBI" id="CHEBI:15377"/>
        <dbReference type="ChEBI" id="CHEBI:15378"/>
        <dbReference type="ChEBI" id="CHEBI:29805"/>
        <dbReference type="ChEBI" id="CHEBI:58189"/>
        <dbReference type="ChEBI" id="CHEBI:141574"/>
    </reaction>
</comment>
<comment type="catalytic activity">
    <reaction evidence="1">
        <text>N(2)-(1-hydroxy-2-oxoethyl)-GMP + H2O = glycolate + GMP + H(+)</text>
        <dbReference type="Rhea" id="RHEA:57304"/>
        <dbReference type="ChEBI" id="CHEBI:15377"/>
        <dbReference type="ChEBI" id="CHEBI:15378"/>
        <dbReference type="ChEBI" id="CHEBI:29805"/>
        <dbReference type="ChEBI" id="CHEBI:58115"/>
        <dbReference type="ChEBI" id="CHEBI:141576"/>
    </reaction>
</comment>
<comment type="catalytic activity">
    <reaction evidence="1">
        <text>an N(2)-(1-hydroxy-2-oxopropyl)-guanosine in RNA + H2O = a guanosine in RNA + lactate + H(+)</text>
        <dbReference type="Rhea" id="RHEA:57288"/>
        <dbReference type="Rhea" id="RHEA-COMP:14855"/>
        <dbReference type="Rhea" id="RHEA-COMP:14858"/>
        <dbReference type="ChEBI" id="CHEBI:15377"/>
        <dbReference type="ChEBI" id="CHEBI:15378"/>
        <dbReference type="ChEBI" id="CHEBI:24996"/>
        <dbReference type="ChEBI" id="CHEBI:74269"/>
        <dbReference type="ChEBI" id="CHEBI:141580"/>
    </reaction>
</comment>
<comment type="catalytic activity">
    <reaction evidence="1">
        <text>an N(2)-(1-hydroxy-2-oxopropyl)-2'-deoxyguanosine in DNA + H2O = a 2'-deoxyguanosine in DNA + lactate + H(+)</text>
        <dbReference type="Rhea" id="RHEA:57300"/>
        <dbReference type="Rhea" id="RHEA-COMP:11367"/>
        <dbReference type="Rhea" id="RHEA-COMP:14856"/>
        <dbReference type="ChEBI" id="CHEBI:15377"/>
        <dbReference type="ChEBI" id="CHEBI:15378"/>
        <dbReference type="ChEBI" id="CHEBI:24996"/>
        <dbReference type="ChEBI" id="CHEBI:85445"/>
        <dbReference type="ChEBI" id="CHEBI:141578"/>
    </reaction>
</comment>
<comment type="catalytic activity">
    <reaction evidence="1">
        <text>an N(2)-(1-hydroxy-2-oxoethyl)-guanosine in RNA + H2O = a guanosine in RNA + glycolate + H(+)</text>
        <dbReference type="Rhea" id="RHEA:57292"/>
        <dbReference type="Rhea" id="RHEA-COMP:14855"/>
        <dbReference type="Rhea" id="RHEA-COMP:14859"/>
        <dbReference type="ChEBI" id="CHEBI:15377"/>
        <dbReference type="ChEBI" id="CHEBI:15378"/>
        <dbReference type="ChEBI" id="CHEBI:29805"/>
        <dbReference type="ChEBI" id="CHEBI:74269"/>
        <dbReference type="ChEBI" id="CHEBI:141581"/>
    </reaction>
</comment>
<comment type="catalytic activity">
    <reaction evidence="1">
        <text>an N(2)-(1-hydroxy-2-oxoethyl)-2'-deoxyguanosine in DNA + H2O = a 2'-deoxyguanosine in DNA + glycolate + H(+)</text>
        <dbReference type="Rhea" id="RHEA:57296"/>
        <dbReference type="Rhea" id="RHEA-COMP:11367"/>
        <dbReference type="Rhea" id="RHEA-COMP:14857"/>
        <dbReference type="ChEBI" id="CHEBI:15377"/>
        <dbReference type="ChEBI" id="CHEBI:15378"/>
        <dbReference type="ChEBI" id="CHEBI:29805"/>
        <dbReference type="ChEBI" id="CHEBI:85445"/>
        <dbReference type="ChEBI" id="CHEBI:141579"/>
    </reaction>
</comment>
<comment type="subcellular location">
    <subcellularLocation>
        <location evidence="1">Cytoplasm</location>
    </subcellularLocation>
</comment>
<comment type="similarity">
    <text evidence="1">Belongs to the peptidase C56 family. HchA subfamily.</text>
</comment>
<keyword id="KW-0963">Cytoplasm</keyword>
<keyword id="KW-0227">DNA damage</keyword>
<keyword id="KW-0234">DNA repair</keyword>
<keyword id="KW-0378">Hydrolase</keyword>
<keyword id="KW-0346">Stress response</keyword>
<protein>
    <recommendedName>
        <fullName evidence="1">Protein/nucleic acid deglycase HchA</fullName>
        <ecNumber evidence="1">3.1.2.-</ecNumber>
        <ecNumber evidence="1">3.5.1.-</ecNumber>
        <ecNumber evidence="1">3.5.1.124</ecNumber>
    </recommendedName>
    <alternativeName>
        <fullName evidence="1">Maillard deglycase</fullName>
    </alternativeName>
</protein>